<geneLocation type="chloroplast"/>
<keyword id="KW-0150">Chloroplast</keyword>
<keyword id="KW-0472">Membrane</keyword>
<keyword id="KW-0597">Phosphoprotein</keyword>
<keyword id="KW-0602">Photosynthesis</keyword>
<keyword id="KW-0604">Photosystem II</keyword>
<keyword id="KW-0934">Plastid</keyword>
<keyword id="KW-0793">Thylakoid</keyword>
<keyword id="KW-0812">Transmembrane</keyword>
<keyword id="KW-1133">Transmembrane helix</keyword>
<comment type="function">
    <text evidence="1">One of the components of the core complex of photosystem II (PSII), required for its stability and/or assembly. PSII is a light-driven water:plastoquinone oxidoreductase that uses light energy to abstract electrons from H(2)O, generating O(2) and a proton gradient subsequently used for ATP formation. It consists of a core antenna complex that captures photons, and an electron transfer chain that converts photonic excitation into a charge separation.</text>
</comment>
<comment type="subunit">
    <text evidence="1">PSII is composed of 1 copy each of membrane proteins PsbA, PsbB, PsbC, PsbD, PsbE, PsbF, PsbH, PsbI, PsbJ, PsbK, PsbL, PsbM, PsbT, PsbX, PsbY, PsbZ, Psb30/Ycf12, at least 3 peripheral proteins of the oxygen-evolving complex and a large number of cofactors. It forms dimeric complexes.</text>
</comment>
<comment type="subcellular location">
    <subcellularLocation>
        <location evidence="1">Plastid</location>
        <location evidence="1">Chloroplast thylakoid membrane</location>
        <topology evidence="1">Single-pass membrane protein</topology>
    </subcellularLocation>
</comment>
<comment type="PTM">
    <text evidence="2">Phosphorylation is a light-dependent reaction catalyzed by a membrane-bound kinase; phosphorylation occurs on Thr residue(s) in the N-terminus of the protein.</text>
</comment>
<comment type="similarity">
    <text evidence="1">Belongs to the PsbH family.</text>
</comment>
<gene>
    <name evidence="1" type="primary">psbH</name>
</gene>
<protein>
    <recommendedName>
        <fullName evidence="1">Photosystem II reaction center protein H</fullName>
        <shortName evidence="1">PSII-H</shortName>
    </recommendedName>
    <alternativeName>
        <fullName evidence="2">Photosystem II 10 kDa phosphoprotein</fullName>
    </alternativeName>
</protein>
<accession>Q20F20</accession>
<dbReference type="EMBL" id="DQ291132">
    <property type="protein sequence ID" value="ABB81986.1"/>
    <property type="molecule type" value="Genomic_DNA"/>
</dbReference>
<dbReference type="RefSeq" id="YP_635825.1">
    <property type="nucleotide sequence ID" value="NC_008099.1"/>
</dbReference>
<dbReference type="SMR" id="Q20F20"/>
<dbReference type="GeneID" id="4100162"/>
<dbReference type="GO" id="GO:0009535">
    <property type="term" value="C:chloroplast thylakoid membrane"/>
    <property type="evidence" value="ECO:0007669"/>
    <property type="project" value="UniProtKB-SubCell"/>
</dbReference>
<dbReference type="GO" id="GO:0009523">
    <property type="term" value="C:photosystem II"/>
    <property type="evidence" value="ECO:0007669"/>
    <property type="project" value="UniProtKB-KW"/>
</dbReference>
<dbReference type="GO" id="GO:0042301">
    <property type="term" value="F:phosphate ion binding"/>
    <property type="evidence" value="ECO:0007669"/>
    <property type="project" value="InterPro"/>
</dbReference>
<dbReference type="GO" id="GO:0015979">
    <property type="term" value="P:photosynthesis"/>
    <property type="evidence" value="ECO:0007669"/>
    <property type="project" value="UniProtKB-UniRule"/>
</dbReference>
<dbReference type="GO" id="GO:0050821">
    <property type="term" value="P:protein stabilization"/>
    <property type="evidence" value="ECO:0007669"/>
    <property type="project" value="InterPro"/>
</dbReference>
<dbReference type="Gene3D" id="1.20.5.880">
    <property type="entry name" value="Photosystem II reaction center protein H"/>
    <property type="match status" value="1"/>
</dbReference>
<dbReference type="HAMAP" id="MF_00752">
    <property type="entry name" value="PSII_PsbH"/>
    <property type="match status" value="1"/>
</dbReference>
<dbReference type="InterPro" id="IPR001056">
    <property type="entry name" value="PSII_PsbH"/>
</dbReference>
<dbReference type="InterPro" id="IPR036863">
    <property type="entry name" value="PSII_PsbH_sf"/>
</dbReference>
<dbReference type="NCBIfam" id="NF002728">
    <property type="entry name" value="PRK02624.1"/>
    <property type="match status" value="1"/>
</dbReference>
<dbReference type="PANTHER" id="PTHR34469">
    <property type="entry name" value="PHOTOSYSTEM II REACTION CENTER PROTEIN H"/>
    <property type="match status" value="1"/>
</dbReference>
<dbReference type="PANTHER" id="PTHR34469:SF4">
    <property type="entry name" value="PHOTOSYSTEM II REACTION CENTER PROTEIN H"/>
    <property type="match status" value="1"/>
</dbReference>
<dbReference type="Pfam" id="PF00737">
    <property type="entry name" value="PsbH"/>
    <property type="match status" value="1"/>
</dbReference>
<dbReference type="SUPFAM" id="SSF161025">
    <property type="entry name" value="Photosystem II 10 kDa phosphoprotein PsbH"/>
    <property type="match status" value="1"/>
</dbReference>
<feature type="chain" id="PRO_0000275764" description="Photosystem II reaction center protein H">
    <location>
        <begin position="1"/>
        <end position="72"/>
    </location>
</feature>
<feature type="transmembrane region" description="Helical" evidence="1">
    <location>
        <begin position="38"/>
        <end position="58"/>
    </location>
</feature>
<feature type="modified residue" description="Phosphothreonine" evidence="2">
    <location>
        <position position="3"/>
    </location>
</feature>
<proteinExistence type="inferred from homology"/>
<name>PSBH_OLTVI</name>
<organism>
    <name type="scientific">Oltmannsiellopsis viridis</name>
    <name type="common">Marine flagellate</name>
    <name type="synonym">Oltmannsiella viridis</name>
    <dbReference type="NCBI Taxonomy" id="51324"/>
    <lineage>
        <taxon>Eukaryota</taxon>
        <taxon>Viridiplantae</taxon>
        <taxon>Chlorophyta</taxon>
        <taxon>Ulvophyceae</taxon>
        <taxon>Oltmannsiellopsidales</taxon>
        <taxon>Oltmannsiellopsidaceae</taxon>
        <taxon>Oltmannsiellopsis</taxon>
    </lineage>
</organism>
<reference key="1">
    <citation type="journal article" date="2006" name="BMC Biol.">
        <title>The complete chloroplast DNA sequence of the green alga Oltmannsiellopsis viridis reveals a distinctive quadripartite architecture in the chloroplast genome of early diverging ulvophytes.</title>
        <authorList>
            <person name="Pombert J.-F."/>
            <person name="Lemieux C."/>
            <person name="Turmel M."/>
        </authorList>
    </citation>
    <scope>NUCLEOTIDE SEQUENCE [LARGE SCALE GENOMIC DNA]</scope>
</reference>
<sequence>MATEKTAQDTGIETALGTLLRPLNSEYGKVAPGWGTTVLMGTFMALFAVFLVIILEIYNSSVLLEDVPMSWQ</sequence>
<evidence type="ECO:0000255" key="1">
    <source>
        <dbReference type="HAMAP-Rule" id="MF_00752"/>
    </source>
</evidence>
<evidence type="ECO:0000305" key="2"/>